<name>PYRH_CHRSD</name>
<gene>
    <name evidence="1" type="primary">pyrH</name>
    <name type="ordered locus">Csal_0565</name>
</gene>
<evidence type="ECO:0000255" key="1">
    <source>
        <dbReference type="HAMAP-Rule" id="MF_01220"/>
    </source>
</evidence>
<comment type="function">
    <text evidence="1">Catalyzes the reversible phosphorylation of UMP to UDP.</text>
</comment>
<comment type="catalytic activity">
    <reaction evidence="1">
        <text>UMP + ATP = UDP + ADP</text>
        <dbReference type="Rhea" id="RHEA:24400"/>
        <dbReference type="ChEBI" id="CHEBI:30616"/>
        <dbReference type="ChEBI" id="CHEBI:57865"/>
        <dbReference type="ChEBI" id="CHEBI:58223"/>
        <dbReference type="ChEBI" id="CHEBI:456216"/>
        <dbReference type="EC" id="2.7.4.22"/>
    </reaction>
</comment>
<comment type="activity regulation">
    <text evidence="1">Inhibited by UTP.</text>
</comment>
<comment type="pathway">
    <text evidence="1">Pyrimidine metabolism; CTP biosynthesis via de novo pathway; UDP from UMP (UMPK route): step 1/1.</text>
</comment>
<comment type="subunit">
    <text evidence="1">Homohexamer.</text>
</comment>
<comment type="subcellular location">
    <subcellularLocation>
        <location evidence="1">Cytoplasm</location>
    </subcellularLocation>
</comment>
<comment type="similarity">
    <text evidence="1">Belongs to the UMP kinase family.</text>
</comment>
<sequence length="253" mass="27285">MSAPTDRSATPAERNEKSKYKRILLKLSGEALIGEHEFGIDPKVLDRMALEIGQLVGIGVQVGIVIGGGNLFRGAALHAAGMERVTGDHMGMLATVMNGLAMRDALERSNIRSRVMSAIPMSGVVEHYDRRTAIRYLTSGDVVIFSAGTGNPFFTTDSAACLRGIEIDANVVLKATKVDGVYDKDPVKHADAAKYERLTYDDVLDQKLGVMDLTAICLVRDHDMPVRVFDMTKPGALLNLVVGGKEGTLVDRG</sequence>
<reference key="1">
    <citation type="journal article" date="2011" name="Stand. Genomic Sci.">
        <title>Complete genome sequence of the halophilic and highly halotolerant Chromohalobacter salexigens type strain (1H11(T)).</title>
        <authorList>
            <person name="Copeland A."/>
            <person name="O'Connor K."/>
            <person name="Lucas S."/>
            <person name="Lapidus A."/>
            <person name="Berry K.W."/>
            <person name="Detter J.C."/>
            <person name="Del Rio T.G."/>
            <person name="Hammon N."/>
            <person name="Dalin E."/>
            <person name="Tice H."/>
            <person name="Pitluck S."/>
            <person name="Bruce D."/>
            <person name="Goodwin L."/>
            <person name="Han C."/>
            <person name="Tapia R."/>
            <person name="Saunders E."/>
            <person name="Schmutz J."/>
            <person name="Brettin T."/>
            <person name="Larimer F."/>
            <person name="Land M."/>
            <person name="Hauser L."/>
            <person name="Vargas C."/>
            <person name="Nieto J.J."/>
            <person name="Kyrpides N.C."/>
            <person name="Ivanova N."/>
            <person name="Goker M."/>
            <person name="Klenk H.P."/>
            <person name="Csonka L.N."/>
            <person name="Woyke T."/>
        </authorList>
    </citation>
    <scope>NUCLEOTIDE SEQUENCE [LARGE SCALE GENOMIC DNA]</scope>
    <source>
        <strain>ATCC BAA-138 / DSM 3043 / CIP 106854 / NCIMB 13768 / 1H11</strain>
    </source>
</reference>
<dbReference type="EC" id="2.7.4.22" evidence="1"/>
<dbReference type="EMBL" id="CP000285">
    <property type="protein sequence ID" value="ABE57927.1"/>
    <property type="molecule type" value="Genomic_DNA"/>
</dbReference>
<dbReference type="RefSeq" id="WP_011505873.1">
    <property type="nucleotide sequence ID" value="NC_007963.1"/>
</dbReference>
<dbReference type="SMR" id="Q1R031"/>
<dbReference type="STRING" id="290398.Csal_0565"/>
<dbReference type="GeneID" id="95333321"/>
<dbReference type="KEGG" id="csa:Csal_0565"/>
<dbReference type="eggNOG" id="COG0528">
    <property type="taxonomic scope" value="Bacteria"/>
</dbReference>
<dbReference type="HOGENOM" id="CLU_033861_0_0_6"/>
<dbReference type="OrthoDB" id="9807458at2"/>
<dbReference type="UniPathway" id="UPA00159">
    <property type="reaction ID" value="UER00275"/>
</dbReference>
<dbReference type="Proteomes" id="UP000000239">
    <property type="component" value="Chromosome"/>
</dbReference>
<dbReference type="GO" id="GO:0005829">
    <property type="term" value="C:cytosol"/>
    <property type="evidence" value="ECO:0007669"/>
    <property type="project" value="TreeGrafter"/>
</dbReference>
<dbReference type="GO" id="GO:0005524">
    <property type="term" value="F:ATP binding"/>
    <property type="evidence" value="ECO:0007669"/>
    <property type="project" value="UniProtKB-KW"/>
</dbReference>
<dbReference type="GO" id="GO:0033862">
    <property type="term" value="F:UMP kinase activity"/>
    <property type="evidence" value="ECO:0007669"/>
    <property type="project" value="UniProtKB-EC"/>
</dbReference>
<dbReference type="GO" id="GO:0044210">
    <property type="term" value="P:'de novo' CTP biosynthetic process"/>
    <property type="evidence" value="ECO:0007669"/>
    <property type="project" value="UniProtKB-UniRule"/>
</dbReference>
<dbReference type="GO" id="GO:0006225">
    <property type="term" value="P:UDP biosynthetic process"/>
    <property type="evidence" value="ECO:0007669"/>
    <property type="project" value="TreeGrafter"/>
</dbReference>
<dbReference type="CDD" id="cd04254">
    <property type="entry name" value="AAK_UMPK-PyrH-Ec"/>
    <property type="match status" value="1"/>
</dbReference>
<dbReference type="FunFam" id="3.40.1160.10:FF:000001">
    <property type="entry name" value="Uridylate kinase"/>
    <property type="match status" value="1"/>
</dbReference>
<dbReference type="Gene3D" id="3.40.1160.10">
    <property type="entry name" value="Acetylglutamate kinase-like"/>
    <property type="match status" value="1"/>
</dbReference>
<dbReference type="HAMAP" id="MF_01220_B">
    <property type="entry name" value="PyrH_B"/>
    <property type="match status" value="1"/>
</dbReference>
<dbReference type="InterPro" id="IPR036393">
    <property type="entry name" value="AceGlu_kinase-like_sf"/>
</dbReference>
<dbReference type="InterPro" id="IPR001048">
    <property type="entry name" value="Asp/Glu/Uridylate_kinase"/>
</dbReference>
<dbReference type="InterPro" id="IPR011817">
    <property type="entry name" value="Uridylate_kinase"/>
</dbReference>
<dbReference type="InterPro" id="IPR015963">
    <property type="entry name" value="Uridylate_kinase_bac"/>
</dbReference>
<dbReference type="NCBIfam" id="TIGR02075">
    <property type="entry name" value="pyrH_bact"/>
    <property type="match status" value="1"/>
</dbReference>
<dbReference type="PANTHER" id="PTHR42833">
    <property type="entry name" value="URIDYLATE KINASE"/>
    <property type="match status" value="1"/>
</dbReference>
<dbReference type="PANTHER" id="PTHR42833:SF4">
    <property type="entry name" value="URIDYLATE KINASE PUMPKIN, CHLOROPLASTIC"/>
    <property type="match status" value="1"/>
</dbReference>
<dbReference type="Pfam" id="PF00696">
    <property type="entry name" value="AA_kinase"/>
    <property type="match status" value="1"/>
</dbReference>
<dbReference type="PIRSF" id="PIRSF005650">
    <property type="entry name" value="Uridylate_kin"/>
    <property type="match status" value="1"/>
</dbReference>
<dbReference type="SUPFAM" id="SSF53633">
    <property type="entry name" value="Carbamate kinase-like"/>
    <property type="match status" value="1"/>
</dbReference>
<accession>Q1R031</accession>
<keyword id="KW-0067">ATP-binding</keyword>
<keyword id="KW-0963">Cytoplasm</keyword>
<keyword id="KW-0418">Kinase</keyword>
<keyword id="KW-0547">Nucleotide-binding</keyword>
<keyword id="KW-0665">Pyrimidine biosynthesis</keyword>
<keyword id="KW-1185">Reference proteome</keyword>
<keyword id="KW-0808">Transferase</keyword>
<feature type="chain" id="PRO_0000323825" description="Uridylate kinase">
    <location>
        <begin position="1"/>
        <end position="253"/>
    </location>
</feature>
<feature type="binding site" evidence="1">
    <location>
        <begin position="26"/>
        <end position="29"/>
    </location>
    <ligand>
        <name>ATP</name>
        <dbReference type="ChEBI" id="CHEBI:30616"/>
    </ligand>
</feature>
<feature type="binding site" evidence="1">
    <location>
        <position position="68"/>
    </location>
    <ligand>
        <name>UMP</name>
        <dbReference type="ChEBI" id="CHEBI:57865"/>
    </ligand>
</feature>
<feature type="binding site" evidence="1">
    <location>
        <position position="69"/>
    </location>
    <ligand>
        <name>ATP</name>
        <dbReference type="ChEBI" id="CHEBI:30616"/>
    </ligand>
</feature>
<feature type="binding site" evidence="1">
    <location>
        <position position="73"/>
    </location>
    <ligand>
        <name>ATP</name>
        <dbReference type="ChEBI" id="CHEBI:30616"/>
    </ligand>
</feature>
<feature type="binding site" evidence="1">
    <location>
        <position position="88"/>
    </location>
    <ligand>
        <name>UMP</name>
        <dbReference type="ChEBI" id="CHEBI:57865"/>
    </ligand>
</feature>
<feature type="binding site" evidence="1">
    <location>
        <begin position="149"/>
        <end position="156"/>
    </location>
    <ligand>
        <name>UMP</name>
        <dbReference type="ChEBI" id="CHEBI:57865"/>
    </ligand>
</feature>
<feature type="binding site" evidence="1">
    <location>
        <position position="176"/>
    </location>
    <ligand>
        <name>ATP</name>
        <dbReference type="ChEBI" id="CHEBI:30616"/>
    </ligand>
</feature>
<feature type="binding site" evidence="1">
    <location>
        <position position="182"/>
    </location>
    <ligand>
        <name>ATP</name>
        <dbReference type="ChEBI" id="CHEBI:30616"/>
    </ligand>
</feature>
<feature type="binding site" evidence="1">
    <location>
        <position position="185"/>
    </location>
    <ligand>
        <name>ATP</name>
        <dbReference type="ChEBI" id="CHEBI:30616"/>
    </ligand>
</feature>
<organism>
    <name type="scientific">Chromohalobacter salexigens (strain ATCC BAA-138 / DSM 3043 / CIP 106854 / NCIMB 13768 / 1H11)</name>
    <dbReference type="NCBI Taxonomy" id="290398"/>
    <lineage>
        <taxon>Bacteria</taxon>
        <taxon>Pseudomonadati</taxon>
        <taxon>Pseudomonadota</taxon>
        <taxon>Gammaproteobacteria</taxon>
        <taxon>Oceanospirillales</taxon>
        <taxon>Halomonadaceae</taxon>
        <taxon>Chromohalobacter</taxon>
    </lineage>
</organism>
<protein>
    <recommendedName>
        <fullName evidence="1">Uridylate kinase</fullName>
        <shortName evidence="1">UK</shortName>
        <ecNumber evidence="1">2.7.4.22</ecNumber>
    </recommendedName>
    <alternativeName>
        <fullName evidence="1">Uridine monophosphate kinase</fullName>
        <shortName evidence="1">UMP kinase</shortName>
        <shortName evidence="1">UMPK</shortName>
    </alternativeName>
</protein>
<proteinExistence type="inferred from homology"/>